<accession>Q65IE2</accession>
<accession>Q62TU3</accession>
<name>Y2292_BACLD</name>
<gene>
    <name type="ordered locus">BLi02292</name>
    <name type="ordered locus">BL01432</name>
</gene>
<proteinExistence type="inferred from homology"/>
<comment type="similarity">
    <text evidence="1">Belongs to the UPF0346 family.</text>
</comment>
<comment type="sequence caution" evidence="2">
    <conflict type="erroneous initiation">
        <sequence resource="EMBL-CDS" id="AAU41172"/>
    </conflict>
</comment>
<reference key="1">
    <citation type="journal article" date="2004" name="J. Mol. Microbiol. Biotechnol.">
        <title>The complete genome sequence of Bacillus licheniformis DSM13, an organism with great industrial potential.</title>
        <authorList>
            <person name="Veith B."/>
            <person name="Herzberg C."/>
            <person name="Steckel S."/>
            <person name="Feesche J."/>
            <person name="Maurer K.H."/>
            <person name="Ehrenreich P."/>
            <person name="Baeumer S."/>
            <person name="Henne A."/>
            <person name="Liesegang H."/>
            <person name="Merkl R."/>
            <person name="Ehrenreich A."/>
            <person name="Gottschalk G."/>
        </authorList>
    </citation>
    <scope>NUCLEOTIDE SEQUENCE [LARGE SCALE GENOMIC DNA]</scope>
    <source>
        <strain>ATCC 14580 / DSM 13 / JCM 2505 / CCUG 7422 / NBRC 12200 / NCIMB 9375 / NCTC 10341 / NRRL NRS-1264 / Gibson 46</strain>
    </source>
</reference>
<reference key="2">
    <citation type="journal article" date="2004" name="Genome Biol.">
        <title>Complete genome sequence of the industrial bacterium Bacillus licheniformis and comparisons with closely related Bacillus species.</title>
        <authorList>
            <person name="Rey M.W."/>
            <person name="Ramaiya P."/>
            <person name="Nelson B.A."/>
            <person name="Brody-Karpin S.D."/>
            <person name="Zaretsky E.J."/>
            <person name="Tang M."/>
            <person name="Lopez de Leon A."/>
            <person name="Xiang H."/>
            <person name="Gusti V."/>
            <person name="Clausen I.G."/>
            <person name="Olsen P.B."/>
            <person name="Rasmussen M.D."/>
            <person name="Andersen J.T."/>
            <person name="Joergensen P.L."/>
            <person name="Larsen T.S."/>
            <person name="Sorokin A."/>
            <person name="Bolotin A."/>
            <person name="Lapidus A."/>
            <person name="Galleron N."/>
            <person name="Ehrlich S.D."/>
            <person name="Berka R.M."/>
        </authorList>
    </citation>
    <scope>NUCLEOTIDE SEQUENCE [LARGE SCALE GENOMIC DNA]</scope>
    <source>
        <strain>ATCC 14580 / DSM 13 / JCM 2505 / CCUG 7422 / NBRC 12200 / NCIMB 9375 / NCTC 10341 / NRRL NRS-1264 / Gibson 46</strain>
    </source>
</reference>
<dbReference type="EMBL" id="AE017333">
    <property type="protein sequence ID" value="AAU41172.1"/>
    <property type="status" value="ALT_INIT"/>
    <property type="molecule type" value="Genomic_DNA"/>
</dbReference>
<dbReference type="EMBL" id="CP000002">
    <property type="protein sequence ID" value="AAU23816.1"/>
    <property type="molecule type" value="Genomic_DNA"/>
</dbReference>
<dbReference type="RefSeq" id="WP_003182759.1">
    <property type="nucleotide sequence ID" value="NC_006322.1"/>
</dbReference>
<dbReference type="SMR" id="Q65IE2"/>
<dbReference type="STRING" id="279010.BL01432"/>
<dbReference type="KEGG" id="bld:BLi02292"/>
<dbReference type="KEGG" id="bli:BL01432"/>
<dbReference type="eggNOG" id="COG4479">
    <property type="taxonomic scope" value="Bacteria"/>
</dbReference>
<dbReference type="HOGENOM" id="CLU_177534_1_0_9"/>
<dbReference type="Proteomes" id="UP000000606">
    <property type="component" value="Chromosome"/>
</dbReference>
<dbReference type="Bgee" id="BL01432">
    <property type="expression patterns" value="Expressed in gastrula and 1 other cell type or tissue"/>
</dbReference>
<dbReference type="Gene3D" id="1.10.150.260">
    <property type="entry name" value="YozE SAM-like"/>
    <property type="match status" value="1"/>
</dbReference>
<dbReference type="HAMAP" id="MF_01538">
    <property type="entry name" value="UPF0346"/>
    <property type="match status" value="1"/>
</dbReference>
<dbReference type="InterPro" id="IPR010673">
    <property type="entry name" value="UPF0346"/>
</dbReference>
<dbReference type="InterPro" id="IPR023089">
    <property type="entry name" value="YozE_SAM-like"/>
</dbReference>
<dbReference type="InterPro" id="IPR036806">
    <property type="entry name" value="YozE_SAM-like_sf"/>
</dbReference>
<dbReference type="NCBIfam" id="NF010193">
    <property type="entry name" value="PRK13672.1"/>
    <property type="match status" value="1"/>
</dbReference>
<dbReference type="Pfam" id="PF06855">
    <property type="entry name" value="YozE_SAM_like"/>
    <property type="match status" value="1"/>
</dbReference>
<dbReference type="PIRSF" id="PIRSF037262">
    <property type="entry name" value="UCP037262"/>
    <property type="match status" value="1"/>
</dbReference>
<dbReference type="SUPFAM" id="SSF140652">
    <property type="entry name" value="YozE-like"/>
    <property type="match status" value="1"/>
</dbReference>
<feature type="chain" id="PRO_0000164269" description="UPF0346 protein BLi02292/BL01432">
    <location>
        <begin position="1"/>
        <end position="73"/>
    </location>
</feature>
<keyword id="KW-1185">Reference proteome</keyword>
<organism>
    <name type="scientific">Bacillus licheniformis (strain ATCC 14580 / DSM 13 / JCM 2505 / CCUG 7422 / NBRC 12200 / NCIMB 9375 / NCTC 10341 / NRRL NRS-1264 / Gibson 46)</name>
    <dbReference type="NCBI Taxonomy" id="279010"/>
    <lineage>
        <taxon>Bacteria</taxon>
        <taxon>Bacillati</taxon>
        <taxon>Bacillota</taxon>
        <taxon>Bacilli</taxon>
        <taxon>Bacillales</taxon>
        <taxon>Bacillaceae</taxon>
        <taxon>Bacillus</taxon>
    </lineage>
</organism>
<protein>
    <recommendedName>
        <fullName evidence="1">UPF0346 protein BLi02292/BL01432</fullName>
    </recommendedName>
</protein>
<sequence>MKSFYHYLMKYRHPKPKDAISEFANHAYLDHGFPKASTHYDEISSYLELNGDYLSSMTTFDEAWERYISETKR</sequence>
<evidence type="ECO:0000255" key="1">
    <source>
        <dbReference type="HAMAP-Rule" id="MF_01538"/>
    </source>
</evidence>
<evidence type="ECO:0000305" key="2"/>